<proteinExistence type="inferred from homology"/>
<gene>
    <name evidence="1" type="primary">pcn</name>
    <name type="ordered locus">TON_0826</name>
</gene>
<dbReference type="EMBL" id="CP000855">
    <property type="protein sequence ID" value="ACJ16314.1"/>
    <property type="molecule type" value="Genomic_DNA"/>
</dbReference>
<dbReference type="RefSeq" id="WP_012571786.1">
    <property type="nucleotide sequence ID" value="NC_011529.1"/>
</dbReference>
<dbReference type="SMR" id="B6YVZ1"/>
<dbReference type="STRING" id="523850.TON_0826"/>
<dbReference type="GeneID" id="7017129"/>
<dbReference type="KEGG" id="ton:TON_0826"/>
<dbReference type="PATRIC" id="fig|523850.10.peg.833"/>
<dbReference type="eggNOG" id="arCOG00488">
    <property type="taxonomic scope" value="Archaea"/>
</dbReference>
<dbReference type="HOGENOM" id="CLU_043978_1_0_2"/>
<dbReference type="OrthoDB" id="14749at2157"/>
<dbReference type="Proteomes" id="UP000002727">
    <property type="component" value="Chromosome"/>
</dbReference>
<dbReference type="GO" id="GO:0003677">
    <property type="term" value="F:DNA binding"/>
    <property type="evidence" value="ECO:0007669"/>
    <property type="project" value="UniProtKB-UniRule"/>
</dbReference>
<dbReference type="GO" id="GO:0030337">
    <property type="term" value="F:DNA polymerase processivity factor activity"/>
    <property type="evidence" value="ECO:0007669"/>
    <property type="project" value="UniProtKB-UniRule"/>
</dbReference>
<dbReference type="GO" id="GO:0006272">
    <property type="term" value="P:leading strand elongation"/>
    <property type="evidence" value="ECO:0007669"/>
    <property type="project" value="TreeGrafter"/>
</dbReference>
<dbReference type="GO" id="GO:0006275">
    <property type="term" value="P:regulation of DNA replication"/>
    <property type="evidence" value="ECO:0007669"/>
    <property type="project" value="UniProtKB-UniRule"/>
</dbReference>
<dbReference type="CDD" id="cd00577">
    <property type="entry name" value="PCNA"/>
    <property type="match status" value="1"/>
</dbReference>
<dbReference type="FunFam" id="3.70.10.10:FF:000038">
    <property type="entry name" value="DNA polymerase sliding clamp 1"/>
    <property type="match status" value="1"/>
</dbReference>
<dbReference type="Gene3D" id="3.70.10.10">
    <property type="match status" value="1"/>
</dbReference>
<dbReference type="HAMAP" id="MF_00317">
    <property type="entry name" value="DNApol_clamp_arch"/>
    <property type="match status" value="1"/>
</dbReference>
<dbReference type="InterPro" id="IPR046938">
    <property type="entry name" value="DNA_clamp_sf"/>
</dbReference>
<dbReference type="InterPro" id="IPR000730">
    <property type="entry name" value="Pr_cel_nuc_antig"/>
</dbReference>
<dbReference type="InterPro" id="IPR022649">
    <property type="entry name" value="Pr_cel_nuc_antig_C"/>
</dbReference>
<dbReference type="InterPro" id="IPR022659">
    <property type="entry name" value="Pr_cel_nuc_antig_CS"/>
</dbReference>
<dbReference type="InterPro" id="IPR022648">
    <property type="entry name" value="Pr_cel_nuc_antig_N"/>
</dbReference>
<dbReference type="NCBIfam" id="TIGR00590">
    <property type="entry name" value="pcna"/>
    <property type="match status" value="1"/>
</dbReference>
<dbReference type="NCBIfam" id="NF002219">
    <property type="entry name" value="PRK01115.1-2"/>
    <property type="match status" value="1"/>
</dbReference>
<dbReference type="NCBIfam" id="NF002221">
    <property type="entry name" value="PRK01115.1-4"/>
    <property type="match status" value="1"/>
</dbReference>
<dbReference type="PANTHER" id="PTHR11352">
    <property type="entry name" value="PROLIFERATING CELL NUCLEAR ANTIGEN"/>
    <property type="match status" value="1"/>
</dbReference>
<dbReference type="PANTHER" id="PTHR11352:SF0">
    <property type="entry name" value="PROLIFERATING CELL NUCLEAR ANTIGEN"/>
    <property type="match status" value="1"/>
</dbReference>
<dbReference type="Pfam" id="PF02747">
    <property type="entry name" value="PCNA_C"/>
    <property type="match status" value="1"/>
</dbReference>
<dbReference type="Pfam" id="PF00705">
    <property type="entry name" value="PCNA_N"/>
    <property type="match status" value="1"/>
</dbReference>
<dbReference type="PRINTS" id="PR00339">
    <property type="entry name" value="PCNACYCLIN"/>
</dbReference>
<dbReference type="SUPFAM" id="SSF55979">
    <property type="entry name" value="DNA clamp"/>
    <property type="match status" value="2"/>
</dbReference>
<dbReference type="PROSITE" id="PS01251">
    <property type="entry name" value="PCNA_1"/>
    <property type="match status" value="1"/>
</dbReference>
<sequence>MPFEIVFDGAKDFADLIATASNLIDEAAFKITEEGISMRAMDPSRVVLIDLNLPESIFSKYEVEEEETVGINMDHFKKILKRGKNKDTLILRKGDENFLEITFEGTAKRTFRLPLIEVEELELDLPELPFTAKVVVLGEVLKEAVKDASLVSDALKFIARENEFIMKAEGETNEVEIKLTLEDEGLLDLEVEEETKSAYGISYLADMIKGIGKADEVIIRFGNEMPLQMEYPIRDEGKLIFLLAPRVED</sequence>
<keyword id="KW-0235">DNA replication</keyword>
<keyword id="KW-0238">DNA-binding</keyword>
<name>PCNA_THEON</name>
<evidence type="ECO:0000255" key="1">
    <source>
        <dbReference type="HAMAP-Rule" id="MF_00317"/>
    </source>
</evidence>
<feature type="chain" id="PRO_1000115817" description="DNA polymerase sliding clamp">
    <location>
        <begin position="1"/>
        <end position="249"/>
    </location>
</feature>
<reference key="1">
    <citation type="journal article" date="2008" name="J. Bacteriol.">
        <title>The complete genome sequence of Thermococcus onnurineus NA1 reveals a mixed heterotrophic and carboxydotrophic metabolism.</title>
        <authorList>
            <person name="Lee H.S."/>
            <person name="Kang S.G."/>
            <person name="Bae S.S."/>
            <person name="Lim J.K."/>
            <person name="Cho Y."/>
            <person name="Kim Y.J."/>
            <person name="Jeon J.H."/>
            <person name="Cha S.-S."/>
            <person name="Kwon K.K."/>
            <person name="Kim H.-T."/>
            <person name="Park C.-J."/>
            <person name="Lee H.-W."/>
            <person name="Kim S.I."/>
            <person name="Chun J."/>
            <person name="Colwell R.R."/>
            <person name="Kim S.-J."/>
            <person name="Lee J.-H."/>
        </authorList>
    </citation>
    <scope>NUCLEOTIDE SEQUENCE [LARGE SCALE GENOMIC DNA]</scope>
    <source>
        <strain>NA1</strain>
    </source>
</reference>
<organism>
    <name type="scientific">Thermococcus onnurineus (strain NA1)</name>
    <dbReference type="NCBI Taxonomy" id="523850"/>
    <lineage>
        <taxon>Archaea</taxon>
        <taxon>Methanobacteriati</taxon>
        <taxon>Methanobacteriota</taxon>
        <taxon>Thermococci</taxon>
        <taxon>Thermococcales</taxon>
        <taxon>Thermococcaceae</taxon>
        <taxon>Thermococcus</taxon>
    </lineage>
</organism>
<protein>
    <recommendedName>
        <fullName evidence="1">DNA polymerase sliding clamp</fullName>
    </recommendedName>
    <alternativeName>
        <fullName evidence="1">Proliferating cell nuclear antigen homolog</fullName>
        <shortName evidence="1">PCNA</shortName>
    </alternativeName>
</protein>
<accession>B6YVZ1</accession>
<comment type="function">
    <text evidence="1">Sliding clamp subunit that acts as a moving platform for DNA processing. Responsible for tethering the catalytic subunit of DNA polymerase and other proteins to DNA during high-speed replication.</text>
</comment>
<comment type="subunit">
    <text evidence="1">Homotrimer. The subunits circularize to form a toroid; DNA passes through its center. Replication factor C (RFC) is required to load the toroid on the DNA.</text>
</comment>
<comment type="similarity">
    <text evidence="1">Belongs to the PCNA family.</text>
</comment>